<dbReference type="EMBL" id="CP001196">
    <property type="protein sequence ID" value="ACI91459.1"/>
    <property type="molecule type" value="Genomic_DNA"/>
</dbReference>
<dbReference type="EMBL" id="CP002826">
    <property type="protein sequence ID" value="AEI04943.1"/>
    <property type="molecule type" value="Genomic_DNA"/>
</dbReference>
<dbReference type="RefSeq" id="WP_012561490.1">
    <property type="nucleotide sequence ID" value="NC_015684.1"/>
</dbReference>
<dbReference type="SMR" id="B6JAU6"/>
<dbReference type="STRING" id="504832.OCA5_c02140"/>
<dbReference type="KEGG" id="oca:OCAR_4310"/>
<dbReference type="KEGG" id="ocg:OCA5_c02140"/>
<dbReference type="PATRIC" id="fig|504832.7.peg.224"/>
<dbReference type="eggNOG" id="COG1872">
    <property type="taxonomic scope" value="Bacteria"/>
</dbReference>
<dbReference type="HOGENOM" id="CLU_130694_3_0_5"/>
<dbReference type="OrthoDB" id="9801972at2"/>
<dbReference type="Proteomes" id="UP000007730">
    <property type="component" value="Chromosome"/>
</dbReference>
<dbReference type="Gene3D" id="3.30.1200.10">
    <property type="entry name" value="YggU-like"/>
    <property type="match status" value="1"/>
</dbReference>
<dbReference type="HAMAP" id="MF_00634">
    <property type="entry name" value="UPF0235"/>
    <property type="match status" value="1"/>
</dbReference>
<dbReference type="InterPro" id="IPR003746">
    <property type="entry name" value="DUF167"/>
</dbReference>
<dbReference type="InterPro" id="IPR036591">
    <property type="entry name" value="YggU-like_sf"/>
</dbReference>
<dbReference type="NCBIfam" id="TIGR00251">
    <property type="entry name" value="DUF167 family protein"/>
    <property type="match status" value="1"/>
</dbReference>
<dbReference type="NCBIfam" id="NF002348">
    <property type="entry name" value="PRK01310.1"/>
    <property type="match status" value="1"/>
</dbReference>
<dbReference type="Pfam" id="PF02594">
    <property type="entry name" value="DUF167"/>
    <property type="match status" value="1"/>
</dbReference>
<dbReference type="SMART" id="SM01152">
    <property type="entry name" value="DUF167"/>
    <property type="match status" value="1"/>
</dbReference>
<dbReference type="SUPFAM" id="SSF69786">
    <property type="entry name" value="YggU-like"/>
    <property type="match status" value="1"/>
</dbReference>
<comment type="similarity">
    <text evidence="1">Belongs to the UPF0235 family.</text>
</comment>
<proteinExistence type="inferred from homology"/>
<organism>
    <name type="scientific">Afipia carboxidovorans (strain ATCC 49405 / DSM 1227 / KCTC 32145 / OM5)</name>
    <name type="common">Oligotropha carboxidovorans</name>
    <dbReference type="NCBI Taxonomy" id="504832"/>
    <lineage>
        <taxon>Bacteria</taxon>
        <taxon>Pseudomonadati</taxon>
        <taxon>Pseudomonadota</taxon>
        <taxon>Alphaproteobacteria</taxon>
        <taxon>Hyphomicrobiales</taxon>
        <taxon>Nitrobacteraceae</taxon>
        <taxon>Afipia</taxon>
    </lineage>
</organism>
<protein>
    <recommendedName>
        <fullName evidence="1">UPF0235 protein OCAR_4310/OCA5_c02140</fullName>
    </recommendedName>
</protein>
<gene>
    <name type="ordered locus">OCAR_4310</name>
    <name type="ordered locus">OCA5_c02140</name>
</gene>
<sequence>MTDPWRYATHGVMVAVRVTPRGGRDAVDGIEMLANGKSVVKVRVRVAAEGGEANRAVTELFAGLLRVPKSKVKVASGVTSRIKQIAIEGDPKQLGEALKAATSIES</sequence>
<name>Y4310_AFIC5</name>
<evidence type="ECO:0000255" key="1">
    <source>
        <dbReference type="HAMAP-Rule" id="MF_00634"/>
    </source>
</evidence>
<keyword id="KW-1185">Reference proteome</keyword>
<reference key="1">
    <citation type="journal article" date="2008" name="J. Bacteriol.">
        <title>Genome sequence of the chemolithoautotrophic bacterium Oligotropha carboxidovorans OM5T.</title>
        <authorList>
            <person name="Paul D."/>
            <person name="Bridges S."/>
            <person name="Burgess S.C."/>
            <person name="Dandass Y."/>
            <person name="Lawrence M.L."/>
        </authorList>
    </citation>
    <scope>NUCLEOTIDE SEQUENCE [LARGE SCALE GENOMIC DNA]</scope>
    <source>
        <strain>ATCC 49405 / DSM 1227 / KCTC 32145 / OM5</strain>
    </source>
</reference>
<reference key="2">
    <citation type="journal article" date="2011" name="J. Bacteriol.">
        <title>Complete genome sequences of the chemolithoautotrophic Oligotropha carboxidovorans strains OM4 and OM5.</title>
        <authorList>
            <person name="Volland S."/>
            <person name="Rachinger M."/>
            <person name="Strittmatter A."/>
            <person name="Daniel R."/>
            <person name="Gottschalk G."/>
            <person name="Meyer O."/>
        </authorList>
    </citation>
    <scope>NUCLEOTIDE SEQUENCE [LARGE SCALE GENOMIC DNA]</scope>
    <source>
        <strain>ATCC 49405 / DSM 1227 / KCTC 32145 / OM5</strain>
    </source>
</reference>
<feature type="chain" id="PRO_1000130699" description="UPF0235 protein OCAR_4310/OCA5_c02140">
    <location>
        <begin position="1"/>
        <end position="106"/>
    </location>
</feature>
<accession>B6JAU6</accession>
<accession>F8BSR6</accession>